<reference key="1">
    <citation type="submission" date="2007-06" db="EMBL/GenBank/DDBJ databases">
        <title>Complete sequence of Methanococcus aeolicus Nankai-3.</title>
        <authorList>
            <consortium name="US DOE Joint Genome Institute"/>
            <person name="Copeland A."/>
            <person name="Lucas S."/>
            <person name="Lapidus A."/>
            <person name="Barry K."/>
            <person name="Glavina del Rio T."/>
            <person name="Dalin E."/>
            <person name="Tice H."/>
            <person name="Pitluck S."/>
            <person name="Chain P."/>
            <person name="Malfatti S."/>
            <person name="Shin M."/>
            <person name="Vergez L."/>
            <person name="Schmutz J."/>
            <person name="Larimer F."/>
            <person name="Land M."/>
            <person name="Hauser L."/>
            <person name="Kyrpides N."/>
            <person name="Lykidis A."/>
            <person name="Sieprawska-Lupa M."/>
            <person name="Whitman W.B."/>
            <person name="Richardson P."/>
        </authorList>
    </citation>
    <scope>NUCLEOTIDE SEQUENCE [LARGE SCALE GENOMIC DNA]</scope>
    <source>
        <strain>ATCC BAA-1280 / DSM 17508 / OCM 812 / Nankai-3</strain>
    </source>
</reference>
<evidence type="ECO:0000255" key="1">
    <source>
        <dbReference type="HAMAP-Rule" id="MF_00234"/>
    </source>
</evidence>
<organism>
    <name type="scientific">Methanococcus aeolicus (strain ATCC BAA-1280 / DSM 17508 / OCM 812 / Nankai-3)</name>
    <dbReference type="NCBI Taxonomy" id="419665"/>
    <lineage>
        <taxon>Archaea</taxon>
        <taxon>Methanobacteriati</taxon>
        <taxon>Methanobacteriota</taxon>
        <taxon>Methanomada group</taxon>
        <taxon>Methanococci</taxon>
        <taxon>Methanococcales</taxon>
        <taxon>Methanococcaceae</taxon>
        <taxon>Methanococcus</taxon>
    </lineage>
</organism>
<feature type="chain" id="PRO_1000021699" description="Adenylate kinase">
    <location>
        <begin position="1"/>
        <end position="193"/>
    </location>
</feature>
<feature type="binding site" evidence="1">
    <location>
        <begin position="10"/>
        <end position="18"/>
    </location>
    <ligand>
        <name>ATP</name>
        <dbReference type="ChEBI" id="CHEBI:30616"/>
    </ligand>
</feature>
<sequence>MEHKLVVVTGVPGVGGTTITQKAMEILKEENINYKMVNFGTAMFEVAQSQNIVEDRDEMRKLDADTQKRIQKMAGRKIAEMVKEQPIVVDTHSTVKTPKGYLAGLPKWVLDELNPNMIVVVETTGDEILMRRMSDETRKRDLETASDIEEHQFMNRCAAMTYGVLTGATVKIVKNKNGLLDEGVEELVSILRY</sequence>
<comment type="catalytic activity">
    <reaction evidence="1">
        <text>AMP + ATP = 2 ADP</text>
        <dbReference type="Rhea" id="RHEA:12973"/>
        <dbReference type="ChEBI" id="CHEBI:30616"/>
        <dbReference type="ChEBI" id="CHEBI:456215"/>
        <dbReference type="ChEBI" id="CHEBI:456216"/>
        <dbReference type="EC" id="2.7.4.3"/>
    </reaction>
</comment>
<comment type="subunit">
    <text evidence="1">Monomer.</text>
</comment>
<comment type="subcellular location">
    <subcellularLocation>
        <location evidence="1">Cytoplasm</location>
    </subcellularLocation>
</comment>
<comment type="similarity">
    <text evidence="1">Belongs to the archaeal adenylate kinase family.</text>
</comment>
<accession>A6UW35</accession>
<keyword id="KW-0067">ATP-binding</keyword>
<keyword id="KW-0963">Cytoplasm</keyword>
<keyword id="KW-0418">Kinase</keyword>
<keyword id="KW-0547">Nucleotide-binding</keyword>
<keyword id="KW-0808">Transferase</keyword>
<gene>
    <name evidence="1" type="primary">adkA</name>
    <name type="ordered locus">Maeo_1130</name>
</gene>
<protein>
    <recommendedName>
        <fullName evidence="1">Adenylate kinase</fullName>
        <shortName evidence="1">AK</shortName>
        <ecNumber evidence="1">2.7.4.3</ecNumber>
    </recommendedName>
    <alternativeName>
        <fullName evidence="1">ATP-AMP transphosphorylase</fullName>
    </alternativeName>
</protein>
<dbReference type="EC" id="2.7.4.3" evidence="1"/>
<dbReference type="EMBL" id="CP000743">
    <property type="protein sequence ID" value="ABR56707.1"/>
    <property type="molecule type" value="Genomic_DNA"/>
</dbReference>
<dbReference type="RefSeq" id="WP_011973839.1">
    <property type="nucleotide sequence ID" value="NC_009635.1"/>
</dbReference>
<dbReference type="SMR" id="A6UW35"/>
<dbReference type="STRING" id="419665.Maeo_1130"/>
<dbReference type="GeneID" id="5327729"/>
<dbReference type="KEGG" id="mae:Maeo_1130"/>
<dbReference type="eggNOG" id="arCOG01039">
    <property type="taxonomic scope" value="Archaea"/>
</dbReference>
<dbReference type="HOGENOM" id="CLU_119371_0_0_2"/>
<dbReference type="OrthoDB" id="26198at2157"/>
<dbReference type="Proteomes" id="UP000001106">
    <property type="component" value="Chromosome"/>
</dbReference>
<dbReference type="GO" id="GO:0005737">
    <property type="term" value="C:cytoplasm"/>
    <property type="evidence" value="ECO:0007669"/>
    <property type="project" value="UniProtKB-SubCell"/>
</dbReference>
<dbReference type="GO" id="GO:0004017">
    <property type="term" value="F:adenylate kinase activity"/>
    <property type="evidence" value="ECO:0007669"/>
    <property type="project" value="UniProtKB-UniRule"/>
</dbReference>
<dbReference type="GO" id="GO:0005524">
    <property type="term" value="F:ATP binding"/>
    <property type="evidence" value="ECO:0007669"/>
    <property type="project" value="UniProtKB-UniRule"/>
</dbReference>
<dbReference type="Gene3D" id="3.40.50.300">
    <property type="entry name" value="P-loop containing nucleotide triphosphate hydrolases"/>
    <property type="match status" value="1"/>
</dbReference>
<dbReference type="HAMAP" id="MF_00234">
    <property type="entry name" value="Adenylate_kinase_AdkA"/>
    <property type="match status" value="1"/>
</dbReference>
<dbReference type="InterPro" id="IPR023477">
    <property type="entry name" value="Adenylate_kinase_AdkA"/>
</dbReference>
<dbReference type="InterPro" id="IPR027417">
    <property type="entry name" value="P-loop_NTPase"/>
</dbReference>
<dbReference type="NCBIfam" id="NF003122">
    <property type="entry name" value="PRK04040.1"/>
    <property type="match status" value="1"/>
</dbReference>
<dbReference type="Pfam" id="PF13207">
    <property type="entry name" value="AAA_17"/>
    <property type="match status" value="1"/>
</dbReference>
<dbReference type="SUPFAM" id="SSF52540">
    <property type="entry name" value="P-loop containing nucleoside triphosphate hydrolases"/>
    <property type="match status" value="1"/>
</dbReference>
<name>KADA_META3</name>
<proteinExistence type="inferred from homology"/>